<sequence length="312" mass="34676">MELQFLGTGAGQPSKQRNVSSVALKLLDELNEIWLFDVGEATQHQILRTNIRLRKVTKIFISHNHGDHIFGLPGLLSTRSFQGDVGPLTIYGPPGIEQFVKVSLKVSRTKVSYPIKFVELTKPGLICEDKGFRVYTDRLDHRIPSFGFRVVEDSHPGELLIDKLAKYNIPNGPLLGQLKRGDQVTLADGTVLNGKDFLGAEKPGRIVTIIYDTRSTPSIARLAKDADVLVHESTFAGDEAKMAHNYYHSTSVQAAKIAKQENVKKLCLSHISARYMGNKAKKLESQAKKVFPNTILVNDFDQINIPMKGSEK</sequence>
<evidence type="ECO:0000255" key="1">
    <source>
        <dbReference type="HAMAP-Rule" id="MF_01818"/>
    </source>
</evidence>
<comment type="function">
    <text evidence="1">Zinc phosphodiesterase, which displays some tRNA 3'-processing endonuclease activity. Probably involved in tRNA maturation, by removing a 3'-trailer from precursor tRNA.</text>
</comment>
<comment type="catalytic activity">
    <reaction evidence="1">
        <text>Endonucleolytic cleavage of RNA, removing extra 3' nucleotides from tRNA precursor, generating 3' termini of tRNAs. A 3'-hydroxy group is left at the tRNA terminus and a 5'-phosphoryl group is left at the trailer molecule.</text>
        <dbReference type="EC" id="3.1.26.11"/>
    </reaction>
</comment>
<comment type="cofactor">
    <cofactor evidence="1">
        <name>Zn(2+)</name>
        <dbReference type="ChEBI" id="CHEBI:29105"/>
    </cofactor>
    <text evidence="1">Binds 2 Zn(2+) ions.</text>
</comment>
<comment type="subunit">
    <text evidence="1">Homodimer.</text>
</comment>
<comment type="similarity">
    <text evidence="1">Belongs to the RNase Z family.</text>
</comment>
<accession>A8YV16</accession>
<gene>
    <name evidence="1" type="primary">rnz</name>
    <name type="ordered locus">lhv_1043</name>
</gene>
<keyword id="KW-0255">Endonuclease</keyword>
<keyword id="KW-0378">Hydrolase</keyword>
<keyword id="KW-0479">Metal-binding</keyword>
<keyword id="KW-0540">Nuclease</keyword>
<keyword id="KW-0819">tRNA processing</keyword>
<keyword id="KW-0862">Zinc</keyword>
<name>RNZ_LACH4</name>
<dbReference type="EC" id="3.1.26.11" evidence="1"/>
<dbReference type="EMBL" id="CP000517">
    <property type="protein sequence ID" value="ABX27104.1"/>
    <property type="molecule type" value="Genomic_DNA"/>
</dbReference>
<dbReference type="RefSeq" id="WP_012211805.1">
    <property type="nucleotide sequence ID" value="NC_010080.1"/>
</dbReference>
<dbReference type="SMR" id="A8YV16"/>
<dbReference type="KEGG" id="lhe:lhv_1043"/>
<dbReference type="eggNOG" id="COG1234">
    <property type="taxonomic scope" value="Bacteria"/>
</dbReference>
<dbReference type="HOGENOM" id="CLU_031317_2_0_9"/>
<dbReference type="Proteomes" id="UP000000790">
    <property type="component" value="Chromosome"/>
</dbReference>
<dbReference type="GO" id="GO:0042781">
    <property type="term" value="F:3'-tRNA processing endoribonuclease activity"/>
    <property type="evidence" value="ECO:0007669"/>
    <property type="project" value="UniProtKB-UniRule"/>
</dbReference>
<dbReference type="GO" id="GO:0008270">
    <property type="term" value="F:zinc ion binding"/>
    <property type="evidence" value="ECO:0007669"/>
    <property type="project" value="UniProtKB-UniRule"/>
</dbReference>
<dbReference type="CDD" id="cd07717">
    <property type="entry name" value="RNaseZ_ZiPD-like_MBL-fold"/>
    <property type="match status" value="1"/>
</dbReference>
<dbReference type="FunFam" id="3.60.15.10:FF:000002">
    <property type="entry name" value="Ribonuclease Z"/>
    <property type="match status" value="1"/>
</dbReference>
<dbReference type="Gene3D" id="3.60.15.10">
    <property type="entry name" value="Ribonuclease Z/Hydroxyacylglutathione hydrolase-like"/>
    <property type="match status" value="1"/>
</dbReference>
<dbReference type="HAMAP" id="MF_01818">
    <property type="entry name" value="RNase_Z_BN"/>
    <property type="match status" value="1"/>
</dbReference>
<dbReference type="InterPro" id="IPR001279">
    <property type="entry name" value="Metallo-B-lactamas"/>
</dbReference>
<dbReference type="InterPro" id="IPR036866">
    <property type="entry name" value="RibonucZ/Hydroxyglut_hydro"/>
</dbReference>
<dbReference type="InterPro" id="IPR013471">
    <property type="entry name" value="RNase_Z/BN"/>
</dbReference>
<dbReference type="NCBIfam" id="NF000801">
    <property type="entry name" value="PRK00055.1-3"/>
    <property type="match status" value="1"/>
</dbReference>
<dbReference type="NCBIfam" id="TIGR02651">
    <property type="entry name" value="RNase_Z"/>
    <property type="match status" value="1"/>
</dbReference>
<dbReference type="PANTHER" id="PTHR46018">
    <property type="entry name" value="ZINC PHOSPHODIESTERASE ELAC PROTEIN 1"/>
    <property type="match status" value="1"/>
</dbReference>
<dbReference type="PANTHER" id="PTHR46018:SF2">
    <property type="entry name" value="ZINC PHOSPHODIESTERASE ELAC PROTEIN 1"/>
    <property type="match status" value="1"/>
</dbReference>
<dbReference type="Pfam" id="PF00753">
    <property type="entry name" value="Lactamase_B"/>
    <property type="match status" value="1"/>
</dbReference>
<dbReference type="SMART" id="SM00849">
    <property type="entry name" value="Lactamase_B"/>
    <property type="match status" value="1"/>
</dbReference>
<dbReference type="SUPFAM" id="SSF56281">
    <property type="entry name" value="Metallo-hydrolase/oxidoreductase"/>
    <property type="match status" value="1"/>
</dbReference>
<proteinExistence type="inferred from homology"/>
<protein>
    <recommendedName>
        <fullName evidence="1">Ribonuclease Z</fullName>
        <shortName evidence="1">RNase Z</shortName>
        <ecNumber evidence="1">3.1.26.11</ecNumber>
    </recommendedName>
    <alternativeName>
        <fullName evidence="1">tRNA 3 endonuclease</fullName>
    </alternativeName>
    <alternativeName>
        <fullName evidence="1">tRNase Z</fullName>
    </alternativeName>
</protein>
<organism>
    <name type="scientific">Lactobacillus helveticus (strain DPC 4571)</name>
    <dbReference type="NCBI Taxonomy" id="405566"/>
    <lineage>
        <taxon>Bacteria</taxon>
        <taxon>Bacillati</taxon>
        <taxon>Bacillota</taxon>
        <taxon>Bacilli</taxon>
        <taxon>Lactobacillales</taxon>
        <taxon>Lactobacillaceae</taxon>
        <taxon>Lactobacillus</taxon>
    </lineage>
</organism>
<reference key="1">
    <citation type="journal article" date="2008" name="J. Bacteriol.">
        <title>Genome sequence of Lactobacillus helveticus: an organism distinguished by selective gene loss and IS element expansion.</title>
        <authorList>
            <person name="Callanan M."/>
            <person name="Kaleta P."/>
            <person name="O'Callaghan J."/>
            <person name="O'Sullivan O."/>
            <person name="Jordan K."/>
            <person name="McAuliffe O."/>
            <person name="Sangrador-Vegas A."/>
            <person name="Slattery L."/>
            <person name="Fitzgerald G.F."/>
            <person name="Beresford T."/>
            <person name="Ross R.P."/>
        </authorList>
    </citation>
    <scope>NUCLEOTIDE SEQUENCE [LARGE SCALE GENOMIC DNA]</scope>
    <source>
        <strain>DPC 4571</strain>
    </source>
</reference>
<feature type="chain" id="PRO_1000073683" description="Ribonuclease Z">
    <location>
        <begin position="1"/>
        <end position="312"/>
    </location>
</feature>
<feature type="active site" description="Proton acceptor" evidence="1">
    <location>
        <position position="67"/>
    </location>
</feature>
<feature type="binding site" evidence="1">
    <location>
        <position position="63"/>
    </location>
    <ligand>
        <name>Zn(2+)</name>
        <dbReference type="ChEBI" id="CHEBI:29105"/>
        <label>1</label>
        <note>catalytic</note>
    </ligand>
</feature>
<feature type="binding site" evidence="1">
    <location>
        <position position="65"/>
    </location>
    <ligand>
        <name>Zn(2+)</name>
        <dbReference type="ChEBI" id="CHEBI:29105"/>
        <label>1</label>
        <note>catalytic</note>
    </ligand>
</feature>
<feature type="binding site" evidence="1">
    <location>
        <position position="67"/>
    </location>
    <ligand>
        <name>Zn(2+)</name>
        <dbReference type="ChEBI" id="CHEBI:29105"/>
        <label>2</label>
        <note>catalytic</note>
    </ligand>
</feature>
<feature type="binding site" evidence="1">
    <location>
        <position position="68"/>
    </location>
    <ligand>
        <name>Zn(2+)</name>
        <dbReference type="ChEBI" id="CHEBI:29105"/>
        <label>2</label>
        <note>catalytic</note>
    </ligand>
</feature>
<feature type="binding site" evidence="1">
    <location>
        <position position="141"/>
    </location>
    <ligand>
        <name>Zn(2+)</name>
        <dbReference type="ChEBI" id="CHEBI:29105"/>
        <label>1</label>
        <note>catalytic</note>
    </ligand>
</feature>
<feature type="binding site" evidence="1">
    <location>
        <position position="212"/>
    </location>
    <ligand>
        <name>Zn(2+)</name>
        <dbReference type="ChEBI" id="CHEBI:29105"/>
        <label>1</label>
        <note>catalytic</note>
    </ligand>
</feature>
<feature type="binding site" evidence="1">
    <location>
        <position position="212"/>
    </location>
    <ligand>
        <name>Zn(2+)</name>
        <dbReference type="ChEBI" id="CHEBI:29105"/>
        <label>2</label>
        <note>catalytic</note>
    </ligand>
</feature>
<feature type="binding site" evidence="1">
    <location>
        <position position="270"/>
    </location>
    <ligand>
        <name>Zn(2+)</name>
        <dbReference type="ChEBI" id="CHEBI:29105"/>
        <label>2</label>
        <note>catalytic</note>
    </ligand>
</feature>